<name>NMT_DROME</name>
<organism>
    <name type="scientific">Drosophila melanogaster</name>
    <name type="common">Fruit fly</name>
    <dbReference type="NCBI Taxonomy" id="7227"/>
    <lineage>
        <taxon>Eukaryota</taxon>
        <taxon>Metazoa</taxon>
        <taxon>Ecdysozoa</taxon>
        <taxon>Arthropoda</taxon>
        <taxon>Hexapoda</taxon>
        <taxon>Insecta</taxon>
        <taxon>Pterygota</taxon>
        <taxon>Neoptera</taxon>
        <taxon>Endopterygota</taxon>
        <taxon>Diptera</taxon>
        <taxon>Brachycera</taxon>
        <taxon>Muscomorpha</taxon>
        <taxon>Ephydroidea</taxon>
        <taxon>Drosophilidae</taxon>
        <taxon>Drosophila</taxon>
        <taxon>Sophophora</taxon>
    </lineage>
</organism>
<comment type="function">
    <text evidence="3 7 8">Adds a myristoyl group (tetradecanoyl group) to the N-terminal glycine residue of certain cellular proteins (Probable). Such protein modification are critical for the developmental processes that involve cell shape changes and movement (PubMed:11139338).</text>
</comment>
<comment type="catalytic activity">
    <reaction evidence="7">
        <text>N-terminal glycyl-[protein] + tetradecanoyl-CoA = N-tetradecanoylglycyl-[protein] + CoA + H(+)</text>
        <dbReference type="Rhea" id="RHEA:15521"/>
        <dbReference type="Rhea" id="RHEA-COMP:12666"/>
        <dbReference type="Rhea" id="RHEA-COMP:12667"/>
        <dbReference type="ChEBI" id="CHEBI:15378"/>
        <dbReference type="ChEBI" id="CHEBI:57287"/>
        <dbReference type="ChEBI" id="CHEBI:57385"/>
        <dbReference type="ChEBI" id="CHEBI:64723"/>
        <dbReference type="ChEBI" id="CHEBI:133050"/>
        <dbReference type="EC" id="2.3.1.97"/>
    </reaction>
    <physiologicalReaction direction="left-to-right" evidence="7">
        <dbReference type="Rhea" id="RHEA:15522"/>
    </physiologicalReaction>
</comment>
<comment type="subcellular location">
    <subcellularLocation>
        <location evidence="4">Membrane</location>
        <topology evidence="4">Peripheral membrane protein</topology>
    </subcellularLocation>
</comment>
<comment type="disruption phenotype">
    <text evidence="3">Mutant embryos show disrupted actin cytoskeleton and abnormal cell morphology (PubMed:11139338). The range of phenotypes includes head involution failure, dorsal closure, and germ-band retraction, as well as widespread ectopic apoptosis (PubMed:11139338).</text>
</comment>
<comment type="similarity">
    <text evidence="6">Belongs to the NMT family.</text>
</comment>
<comment type="sequence caution" evidence="6">
    <conflict type="erroneous gene model prediction">
        <sequence resource="EMBL-CDS" id="AAC08578"/>
    </conflict>
</comment>
<evidence type="ECO:0000250" key="1">
    <source>
        <dbReference type="UniProtKB" id="P30419"/>
    </source>
</evidence>
<evidence type="ECO:0000256" key="2">
    <source>
        <dbReference type="SAM" id="MobiDB-lite"/>
    </source>
</evidence>
<evidence type="ECO:0000269" key="3">
    <source>
    </source>
</evidence>
<evidence type="ECO:0000269" key="4">
    <source>
    </source>
</evidence>
<evidence type="ECO:0000303" key="5">
    <source>
    </source>
</evidence>
<evidence type="ECO:0000305" key="6"/>
<evidence type="ECO:0000305" key="7">
    <source>
    </source>
</evidence>
<evidence type="ECO:0000305" key="8">
    <source>
    </source>
</evidence>
<feature type="chain" id="PRO_0000064228" description="Glycylpeptide N-tetradecanoyltransferase">
    <location>
        <begin position="1"/>
        <end position="472"/>
    </location>
</feature>
<feature type="region of interest" description="Disordered" evidence="2">
    <location>
        <begin position="1"/>
        <end position="23"/>
    </location>
</feature>
<feature type="region of interest" description="Disordered" evidence="2">
    <location>
        <begin position="43"/>
        <end position="65"/>
    </location>
</feature>
<feature type="binding site" evidence="1">
    <location>
        <position position="93"/>
    </location>
    <ligand>
        <name>tetradecanoyl-CoA</name>
        <dbReference type="ChEBI" id="CHEBI:57385"/>
    </ligand>
</feature>
<feature type="binding site" evidence="1">
    <location>
        <position position="94"/>
    </location>
    <ligand>
        <name>tetradecanoyl-CoA</name>
        <dbReference type="ChEBI" id="CHEBI:57385"/>
    </ligand>
</feature>
<feature type="binding site" evidence="1">
    <location>
        <position position="223"/>
    </location>
    <ligand>
        <name>tetradecanoyl-CoA</name>
        <dbReference type="ChEBI" id="CHEBI:57385"/>
    </ligand>
</feature>
<feature type="binding site" evidence="1">
    <location>
        <position position="224"/>
    </location>
    <ligand>
        <name>tetradecanoyl-CoA</name>
        <dbReference type="ChEBI" id="CHEBI:57385"/>
    </ligand>
</feature>
<feature type="binding site" evidence="1">
    <location>
        <position position="225"/>
    </location>
    <ligand>
        <name>tetradecanoyl-CoA</name>
        <dbReference type="ChEBI" id="CHEBI:57385"/>
    </ligand>
</feature>
<feature type="binding site" evidence="1">
    <location>
        <position position="226"/>
    </location>
    <ligand>
        <name>tetradecanoyl-CoA</name>
        <dbReference type="ChEBI" id="CHEBI:57385"/>
    </ligand>
</feature>
<feature type="binding site" evidence="1">
    <location>
        <position position="232"/>
    </location>
    <ligand>
        <name>tetradecanoyl-CoA</name>
        <dbReference type="ChEBI" id="CHEBI:57385"/>
    </ligand>
</feature>
<feature type="binding site" evidence="1">
    <location>
        <position position="234"/>
    </location>
    <ligand>
        <name>tetradecanoyl-CoA</name>
        <dbReference type="ChEBI" id="CHEBI:57385"/>
    </ligand>
</feature>
<feature type="binding site" evidence="1">
    <location>
        <position position="235"/>
    </location>
    <ligand>
        <name>tetradecanoyl-CoA</name>
        <dbReference type="ChEBI" id="CHEBI:57385"/>
    </ligand>
</feature>
<feature type="binding site" evidence="1">
    <location>
        <position position="236"/>
    </location>
    <ligand>
        <name>tetradecanoyl-CoA</name>
        <dbReference type="ChEBI" id="CHEBI:57385"/>
    </ligand>
</feature>
<feature type="sequence conflict" description="In Ref. 1; AAC08578." evidence="6" ref="1">
    <location>
        <position position="130"/>
    </location>
</feature>
<feature type="sequence conflict" description="In Ref. 1; AAC08578." evidence="6" ref="1">
    <original>T</original>
    <variation>S</variation>
    <location>
        <position position="244"/>
    </location>
</feature>
<feature type="sequence conflict" description="In Ref. 1; AAC08578." evidence="6" ref="1">
    <original>N</original>
    <variation>G</variation>
    <location>
        <position position="412"/>
    </location>
</feature>
<feature type="sequence conflict" description="In Ref. 1; AAC08578." evidence="6" ref="1">
    <original>EIALILM</original>
    <variation>RLL</variation>
    <location>
        <begin position="466"/>
        <end position="472"/>
    </location>
</feature>
<reference key="1">
    <citation type="journal article" date="1997" name="J. Cell Sci.">
        <title>Sequence and expression of Drosophila myristoyl-CoA: protein N-myristoyl transferase: evidence for proteolytic processing and membrane localisation.</title>
        <authorList>
            <person name="Ntwasa M."/>
            <person name="Egerton M."/>
            <person name="Gay N.J."/>
        </authorList>
    </citation>
    <scope>NUCLEOTIDE SEQUENCE [GENOMIC DNA]</scope>
    <scope>FUNCTION</scope>
    <scope>SUBCELLULAR LOCATION</scope>
</reference>
<reference key="2">
    <citation type="journal article" date="2000" name="Science">
        <title>The genome sequence of Drosophila melanogaster.</title>
        <authorList>
            <person name="Adams M.D."/>
            <person name="Celniker S.E."/>
            <person name="Holt R.A."/>
            <person name="Evans C.A."/>
            <person name="Gocayne J.D."/>
            <person name="Amanatides P.G."/>
            <person name="Scherer S.E."/>
            <person name="Li P.W."/>
            <person name="Hoskins R.A."/>
            <person name="Galle R.F."/>
            <person name="George R.A."/>
            <person name="Lewis S.E."/>
            <person name="Richards S."/>
            <person name="Ashburner M."/>
            <person name="Henderson S.N."/>
            <person name="Sutton G.G."/>
            <person name="Wortman J.R."/>
            <person name="Yandell M.D."/>
            <person name="Zhang Q."/>
            <person name="Chen L.X."/>
            <person name="Brandon R.C."/>
            <person name="Rogers Y.-H.C."/>
            <person name="Blazej R.G."/>
            <person name="Champe M."/>
            <person name="Pfeiffer B.D."/>
            <person name="Wan K.H."/>
            <person name="Doyle C."/>
            <person name="Baxter E.G."/>
            <person name="Helt G."/>
            <person name="Nelson C.R."/>
            <person name="Miklos G.L.G."/>
            <person name="Abril J.F."/>
            <person name="Agbayani A."/>
            <person name="An H.-J."/>
            <person name="Andrews-Pfannkoch C."/>
            <person name="Baldwin D."/>
            <person name="Ballew R.M."/>
            <person name="Basu A."/>
            <person name="Baxendale J."/>
            <person name="Bayraktaroglu L."/>
            <person name="Beasley E.M."/>
            <person name="Beeson K.Y."/>
            <person name="Benos P.V."/>
            <person name="Berman B.P."/>
            <person name="Bhandari D."/>
            <person name="Bolshakov S."/>
            <person name="Borkova D."/>
            <person name="Botchan M.R."/>
            <person name="Bouck J."/>
            <person name="Brokstein P."/>
            <person name="Brottier P."/>
            <person name="Burtis K.C."/>
            <person name="Busam D.A."/>
            <person name="Butler H."/>
            <person name="Cadieu E."/>
            <person name="Center A."/>
            <person name="Chandra I."/>
            <person name="Cherry J.M."/>
            <person name="Cawley S."/>
            <person name="Dahlke C."/>
            <person name="Davenport L.B."/>
            <person name="Davies P."/>
            <person name="de Pablos B."/>
            <person name="Delcher A."/>
            <person name="Deng Z."/>
            <person name="Mays A.D."/>
            <person name="Dew I."/>
            <person name="Dietz S.M."/>
            <person name="Dodson K."/>
            <person name="Doup L.E."/>
            <person name="Downes M."/>
            <person name="Dugan-Rocha S."/>
            <person name="Dunkov B.C."/>
            <person name="Dunn P."/>
            <person name="Durbin K.J."/>
            <person name="Evangelista C.C."/>
            <person name="Ferraz C."/>
            <person name="Ferriera S."/>
            <person name="Fleischmann W."/>
            <person name="Fosler C."/>
            <person name="Gabrielian A.E."/>
            <person name="Garg N.S."/>
            <person name="Gelbart W.M."/>
            <person name="Glasser K."/>
            <person name="Glodek A."/>
            <person name="Gong F."/>
            <person name="Gorrell J.H."/>
            <person name="Gu Z."/>
            <person name="Guan P."/>
            <person name="Harris M."/>
            <person name="Harris N.L."/>
            <person name="Harvey D.A."/>
            <person name="Heiman T.J."/>
            <person name="Hernandez J.R."/>
            <person name="Houck J."/>
            <person name="Hostin D."/>
            <person name="Houston K.A."/>
            <person name="Howland T.J."/>
            <person name="Wei M.-H."/>
            <person name="Ibegwam C."/>
            <person name="Jalali M."/>
            <person name="Kalush F."/>
            <person name="Karpen G.H."/>
            <person name="Ke Z."/>
            <person name="Kennison J.A."/>
            <person name="Ketchum K.A."/>
            <person name="Kimmel B.E."/>
            <person name="Kodira C.D."/>
            <person name="Kraft C.L."/>
            <person name="Kravitz S."/>
            <person name="Kulp D."/>
            <person name="Lai Z."/>
            <person name="Lasko P."/>
            <person name="Lei Y."/>
            <person name="Levitsky A.A."/>
            <person name="Li J.H."/>
            <person name="Li Z."/>
            <person name="Liang Y."/>
            <person name="Lin X."/>
            <person name="Liu X."/>
            <person name="Mattei B."/>
            <person name="McIntosh T.C."/>
            <person name="McLeod M.P."/>
            <person name="McPherson D."/>
            <person name="Merkulov G."/>
            <person name="Milshina N.V."/>
            <person name="Mobarry C."/>
            <person name="Morris J."/>
            <person name="Moshrefi A."/>
            <person name="Mount S.M."/>
            <person name="Moy M."/>
            <person name="Murphy B."/>
            <person name="Murphy L."/>
            <person name="Muzny D.M."/>
            <person name="Nelson D.L."/>
            <person name="Nelson D.R."/>
            <person name="Nelson K.A."/>
            <person name="Nixon K."/>
            <person name="Nusskern D.R."/>
            <person name="Pacleb J.M."/>
            <person name="Palazzolo M."/>
            <person name="Pittman G.S."/>
            <person name="Pan S."/>
            <person name="Pollard J."/>
            <person name="Puri V."/>
            <person name="Reese M.G."/>
            <person name="Reinert K."/>
            <person name="Remington K."/>
            <person name="Saunders R.D.C."/>
            <person name="Scheeler F."/>
            <person name="Shen H."/>
            <person name="Shue B.C."/>
            <person name="Siden-Kiamos I."/>
            <person name="Simpson M."/>
            <person name="Skupski M.P."/>
            <person name="Smith T.J."/>
            <person name="Spier E."/>
            <person name="Spradling A.C."/>
            <person name="Stapleton M."/>
            <person name="Strong R."/>
            <person name="Sun E."/>
            <person name="Svirskas R."/>
            <person name="Tector C."/>
            <person name="Turner R."/>
            <person name="Venter E."/>
            <person name="Wang A.H."/>
            <person name="Wang X."/>
            <person name="Wang Z.-Y."/>
            <person name="Wassarman D.A."/>
            <person name="Weinstock G.M."/>
            <person name="Weissenbach J."/>
            <person name="Williams S.M."/>
            <person name="Woodage T."/>
            <person name="Worley K.C."/>
            <person name="Wu D."/>
            <person name="Yang S."/>
            <person name="Yao Q.A."/>
            <person name="Ye J."/>
            <person name="Yeh R.-F."/>
            <person name="Zaveri J.S."/>
            <person name="Zhan M."/>
            <person name="Zhang G."/>
            <person name="Zhao Q."/>
            <person name="Zheng L."/>
            <person name="Zheng X.H."/>
            <person name="Zhong F.N."/>
            <person name="Zhong W."/>
            <person name="Zhou X."/>
            <person name="Zhu S.C."/>
            <person name="Zhu X."/>
            <person name="Smith H.O."/>
            <person name="Gibbs R.A."/>
            <person name="Myers E.W."/>
            <person name="Rubin G.M."/>
            <person name="Venter J.C."/>
        </authorList>
    </citation>
    <scope>NUCLEOTIDE SEQUENCE [LARGE SCALE GENOMIC DNA]</scope>
    <source>
        <strain>Berkeley</strain>
    </source>
</reference>
<reference key="3">
    <citation type="journal article" date="2002" name="Genome Biol.">
        <title>Annotation of the Drosophila melanogaster euchromatic genome: a systematic review.</title>
        <authorList>
            <person name="Misra S."/>
            <person name="Crosby M.A."/>
            <person name="Mungall C.J."/>
            <person name="Matthews B.B."/>
            <person name="Campbell K.S."/>
            <person name="Hradecky P."/>
            <person name="Huang Y."/>
            <person name="Kaminker J.S."/>
            <person name="Millburn G.H."/>
            <person name="Prochnik S.E."/>
            <person name="Smith C.D."/>
            <person name="Tupy J.L."/>
            <person name="Whitfield E.J."/>
            <person name="Bayraktaroglu L."/>
            <person name="Berman B.P."/>
            <person name="Bettencourt B.R."/>
            <person name="Celniker S.E."/>
            <person name="de Grey A.D.N.J."/>
            <person name="Drysdale R.A."/>
            <person name="Harris N.L."/>
            <person name="Richter J."/>
            <person name="Russo S."/>
            <person name="Schroeder A.J."/>
            <person name="Shu S.Q."/>
            <person name="Stapleton M."/>
            <person name="Yamada C."/>
            <person name="Ashburner M."/>
            <person name="Gelbart W.M."/>
            <person name="Rubin G.M."/>
            <person name="Lewis S.E."/>
        </authorList>
    </citation>
    <scope>GENOME REANNOTATION</scope>
    <source>
        <strain>Berkeley</strain>
    </source>
</reference>
<reference key="4">
    <citation type="journal article" date="2000" name="Science">
        <title>A Drosophila complementary DNA resource.</title>
        <authorList>
            <person name="Rubin G.M."/>
            <person name="Hong L."/>
            <person name="Brokstein P."/>
            <person name="Evans-Holm M."/>
            <person name="Frise E."/>
            <person name="Stapleton M."/>
            <person name="Harvey D.A."/>
        </authorList>
    </citation>
    <scope>NUCLEOTIDE SEQUENCE [LARGE SCALE MRNA]</scope>
    <source>
        <strain>Berkeley</strain>
        <tissue>Ovary</tissue>
    </source>
</reference>
<reference key="5">
    <citation type="journal article" date="2002" name="Genome Biol.">
        <title>A Drosophila full-length cDNA resource.</title>
        <authorList>
            <person name="Stapleton M."/>
            <person name="Carlson J.W."/>
            <person name="Brokstein P."/>
            <person name="Yu C."/>
            <person name="Champe M."/>
            <person name="George R.A."/>
            <person name="Guarin H."/>
            <person name="Kronmiller B."/>
            <person name="Pacleb J.M."/>
            <person name="Park S."/>
            <person name="Wan K.H."/>
            <person name="Rubin G.M."/>
            <person name="Celniker S.E."/>
        </authorList>
    </citation>
    <scope>NUCLEOTIDE SEQUENCE [LARGE SCALE MRNA]</scope>
    <source>
        <strain>Berkeley</strain>
        <tissue>Embryo</tissue>
    </source>
</reference>
<reference key="6">
    <citation type="journal article" date="2001" name="Exp. Cell Res.">
        <title>Drosophila embryos lacking N-myristoyltransferase have multiple developmental defects.</title>
        <authorList>
            <person name="Ntwasa M."/>
            <person name="Aapies S."/>
            <person name="Schiffmann D.A."/>
            <person name="Gay N.J."/>
        </authorList>
    </citation>
    <scope>FUNCTION</scope>
    <scope>CATALYTIC ACTIVITY</scope>
    <scope>DISRUPTION PHENOTYPE</scope>
</reference>
<proteinExistence type="evidence at protein level"/>
<protein>
    <recommendedName>
        <fullName>Glycylpeptide N-tetradecanoyltransferase</fullName>
        <ecNumber evidence="7">2.3.1.97</ecNumber>
    </recommendedName>
    <alternativeName>
        <fullName>Myristoyl-CoA:protein N-myristoyltransferase</fullName>
        <shortName evidence="5">NMT</shortName>
    </alternativeName>
    <alternativeName>
        <fullName>Peptide N-myristoyltransferase</fullName>
    </alternativeName>
    <alternativeName>
        <fullName>dNMT</fullName>
    </alternativeName>
</protein>
<accession>O61613</accession>
<accession>Q9XZ55</accession>
<keyword id="KW-0012">Acyltransferase</keyword>
<keyword id="KW-0472">Membrane</keyword>
<keyword id="KW-1185">Reference proteome</keyword>
<keyword id="KW-0808">Transferase</keyword>
<sequence length="472" mass="53833">MPNENAEDLSGQELKQKAKEVADASEAMLEKVVAGLNIQDTASTNAAGNEDAEQPDGAKNEASVSANASKQALLQAVSDAMASTRQMAKKFAFWSTQPVTKLDEQVTTNECIEPNKEISEIRALPYTLPGGFKWVTLDLNDANDLKELYTLLNENYVEDDDAMFRFDYQPEFLKWSLQPPGWKRDWHVGVRVEKSGKLVGFISAIPSKLKSYDKVLKVVDINFLCVHKKLRSKRVAPVLIREITRRVNLTGIFQAAYTAGVVLPTPVATCRYWHRSLNPKKLVDVRFSHLARNMTMQRTMKLYKLPDQPKTKGYRRITAKDMDKAHKLLEDYLKRFQLSPVFSKEEFRHWFTPKEGIIDCFVVADEKGNITDLTSYYCLPSSVMHHPVHKTVRAAYSFYNVSTKTPWLDLMNDALISARNVQMDVYNALDLMENKKYFAPLKFGAGDGNLQYYLYNWRCPSMQPEEIALILM</sequence>
<gene>
    <name type="primary">Nmt</name>
    <name type="ORF">CG7436</name>
</gene>
<dbReference type="EC" id="2.3.1.97" evidence="7"/>
<dbReference type="EMBL" id="AF053725">
    <property type="protein sequence ID" value="AAC08578.1"/>
    <property type="status" value="ALT_SEQ"/>
    <property type="molecule type" value="Genomic_DNA"/>
</dbReference>
<dbReference type="EMBL" id="AE014296">
    <property type="protein sequence ID" value="AAF50476.1"/>
    <property type="molecule type" value="Genomic_DNA"/>
</dbReference>
<dbReference type="EMBL" id="AF132556">
    <property type="protein sequence ID" value="AAD27855.1"/>
    <property type="molecule type" value="mRNA"/>
</dbReference>
<dbReference type="EMBL" id="AY118963">
    <property type="protein sequence ID" value="AAM50823.1"/>
    <property type="molecule type" value="mRNA"/>
</dbReference>
<dbReference type="RefSeq" id="NP_523969.1">
    <property type="nucleotide sequence ID" value="NM_079245.3"/>
</dbReference>
<dbReference type="SMR" id="O61613"/>
<dbReference type="BioGRID" id="64329">
    <property type="interactions" value="9"/>
</dbReference>
<dbReference type="FunCoup" id="O61613">
    <property type="interactions" value="2267"/>
</dbReference>
<dbReference type="IntAct" id="O61613">
    <property type="interactions" value="5"/>
</dbReference>
<dbReference type="STRING" id="7227.FBpp0076451"/>
<dbReference type="GlyGen" id="O61613">
    <property type="glycosylation" value="1 site"/>
</dbReference>
<dbReference type="PaxDb" id="7227-FBpp0076451"/>
<dbReference type="DNASU" id="38909"/>
<dbReference type="EnsemblMetazoa" id="FBtr0076728">
    <property type="protein sequence ID" value="FBpp0076451"/>
    <property type="gene ID" value="FBgn0020392"/>
</dbReference>
<dbReference type="GeneID" id="38909"/>
<dbReference type="KEGG" id="dme:Dmel_CG7436"/>
<dbReference type="AGR" id="FB:FBgn0020392"/>
<dbReference type="CTD" id="38909"/>
<dbReference type="FlyBase" id="FBgn0020392">
    <property type="gene designation" value="Nmt"/>
</dbReference>
<dbReference type="VEuPathDB" id="VectorBase:FBgn0020392"/>
<dbReference type="eggNOG" id="KOG2779">
    <property type="taxonomic scope" value="Eukaryota"/>
</dbReference>
<dbReference type="GeneTree" id="ENSGT00390000017837"/>
<dbReference type="HOGENOM" id="CLU_022882_1_0_1"/>
<dbReference type="InParanoid" id="O61613"/>
<dbReference type="OMA" id="GWKRDWH"/>
<dbReference type="OrthoDB" id="60315at2759"/>
<dbReference type="PhylomeDB" id="O61613"/>
<dbReference type="BioGRID-ORCS" id="38909">
    <property type="hits" value="0 hits in 3 CRISPR screens"/>
</dbReference>
<dbReference type="GenomeRNAi" id="38909"/>
<dbReference type="PRO" id="PR:O61613"/>
<dbReference type="Proteomes" id="UP000000803">
    <property type="component" value="Chromosome 3L"/>
</dbReference>
<dbReference type="Bgee" id="FBgn0020392">
    <property type="expression patterns" value="Expressed in secondary oocyte and 86 other cell types or tissues"/>
</dbReference>
<dbReference type="GO" id="GO:0005829">
    <property type="term" value="C:cytosol"/>
    <property type="evidence" value="ECO:0000318"/>
    <property type="project" value="GO_Central"/>
</dbReference>
<dbReference type="GO" id="GO:0016020">
    <property type="term" value="C:membrane"/>
    <property type="evidence" value="ECO:0000314"/>
    <property type="project" value="UniProtKB"/>
</dbReference>
<dbReference type="GO" id="GO:0004379">
    <property type="term" value="F:glycylpeptide N-tetradecanoyltransferase activity"/>
    <property type="evidence" value="ECO:0000314"/>
    <property type="project" value="FlyBase"/>
</dbReference>
<dbReference type="GO" id="GO:0007391">
    <property type="term" value="P:dorsal closure"/>
    <property type="evidence" value="ECO:0000304"/>
    <property type="project" value="FlyBase"/>
</dbReference>
<dbReference type="GO" id="GO:0072657">
    <property type="term" value="P:protein localization to membrane"/>
    <property type="evidence" value="ECO:0000318"/>
    <property type="project" value="GO_Central"/>
</dbReference>
<dbReference type="FunFam" id="3.40.630.170:FF:000001">
    <property type="entry name" value="Glycylpeptide N-tetradecanoyltransferase"/>
    <property type="match status" value="1"/>
</dbReference>
<dbReference type="FunFam" id="3.40.630.30:FF:000042">
    <property type="entry name" value="Glycylpeptide N-tetradecanoyltransferase"/>
    <property type="match status" value="1"/>
</dbReference>
<dbReference type="Gene3D" id="3.40.630.170">
    <property type="match status" value="1"/>
</dbReference>
<dbReference type="InterPro" id="IPR016181">
    <property type="entry name" value="Acyl_CoA_acyltransferase"/>
</dbReference>
<dbReference type="InterPro" id="IPR000903">
    <property type="entry name" value="NMT"/>
</dbReference>
<dbReference type="InterPro" id="IPR022677">
    <property type="entry name" value="NMT_C"/>
</dbReference>
<dbReference type="InterPro" id="IPR022678">
    <property type="entry name" value="NMT_CS"/>
</dbReference>
<dbReference type="InterPro" id="IPR022676">
    <property type="entry name" value="NMT_N"/>
</dbReference>
<dbReference type="PANTHER" id="PTHR11377:SF5">
    <property type="entry name" value="GLYCYLPEPTIDE N-TETRADECANOYLTRANSFERASE"/>
    <property type="match status" value="1"/>
</dbReference>
<dbReference type="PANTHER" id="PTHR11377">
    <property type="entry name" value="N-MYRISTOYL TRANSFERASE"/>
    <property type="match status" value="1"/>
</dbReference>
<dbReference type="Pfam" id="PF01233">
    <property type="entry name" value="NMT"/>
    <property type="match status" value="1"/>
</dbReference>
<dbReference type="Pfam" id="PF02799">
    <property type="entry name" value="NMT_C"/>
    <property type="match status" value="1"/>
</dbReference>
<dbReference type="PIRSF" id="PIRSF015892">
    <property type="entry name" value="N-myristl_transf"/>
    <property type="match status" value="1"/>
</dbReference>
<dbReference type="SUPFAM" id="SSF55729">
    <property type="entry name" value="Acyl-CoA N-acyltransferases (Nat)"/>
    <property type="match status" value="2"/>
</dbReference>
<dbReference type="PROSITE" id="PS00975">
    <property type="entry name" value="NMT_1"/>
    <property type="match status" value="1"/>
</dbReference>
<dbReference type="PROSITE" id="PS00976">
    <property type="entry name" value="NMT_2"/>
    <property type="match status" value="1"/>
</dbReference>